<accession>P09915</accession>
<organismHost>
    <name type="scientific">Bacillus subtilis</name>
    <dbReference type="NCBI Taxonomy" id="1423"/>
</organismHost>
<protein>
    <recommendedName>
        <fullName evidence="3">Orphan methyltransferase M.Rho11sI</fullName>
        <shortName evidence="3">M.Rho11sI</shortName>
        <ecNumber>2.1.1.37</ecNumber>
    </recommendedName>
    <alternativeName>
        <fullName>Bsu P11s</fullName>
    </alternativeName>
    <alternativeName>
        <fullName>Cytosine-specific methyltransferase Rho11sI</fullName>
    </alternativeName>
    <alternativeName>
        <fullName>Modification methylase Rho11sI</fullName>
    </alternativeName>
</protein>
<sequence>MSKLRVMSLFSGIGAFEAALRNIGVEYELVGFSEIDKYAIKSYCAIHNADEQLNFGDVSKIDKKKLPEFDLLVGGSPCQSFSVAGYRKGFEDTRGTLFFQYIDTLKEKQPRYFVFENVKGLINHDKGNTLNIMAESFSEVGYRIDLELLNSKFFNVPQNRERIYIIGVREDLIENDEWVVEKGRNDVLSKGKKRLKELNIKSFNFKWSAQDIVGRRLREILEEYVDEKYYLSEEKTSKLIEQIEKPKEKDVVFVGGINVGKRWLNNGKTYSRNFKQGNRVYDSNGIATTLTSQSVGGLGGQTSLYKVEDPIMIGHIDLKGHDAIKRVYSPDGVSPTLTTMGEGHREPKIAVEYVGNINPSGKGMNDQVYNSNGLSPTLTTNKGEGVKISVPNPEIRPVLTPEREEKRQNGRRFKEDDEPAFTVNTIDRHGVAIGEYPKYRIRKLTPLECWRLQAFDEEDFEKALSVGISNSQLYKQAGNSITVTVLESIFKELIHTYVNEESE</sequence>
<reference key="1">
    <citation type="journal article" date="1987" name="EMBO J.">
        <title>Organization of multispecific DNA methyltransferases encoded by temperate Bacillus subtilis phages.</title>
        <authorList>
            <person name="Behrens B."/>
            <person name="Noyer-Weidner M."/>
            <person name="Pawlek B."/>
            <person name="Lauster R."/>
            <person name="Balganesh T.S."/>
            <person name="Trautner T.A."/>
        </authorList>
    </citation>
    <scope>NUCLEOTIDE SEQUENCE [GENOMIC DNA]</scope>
    <scope>FUNCTION</scope>
</reference>
<reference key="2">
    <citation type="submission" date="1987-09" db="EMBL/GenBank/DDBJ databases">
        <authorList>
            <person name="Trautner T.A."/>
        </authorList>
    </citation>
    <scope>SEQUENCE REVISION TO 476</scope>
</reference>
<reference key="3">
    <citation type="journal article" date="2003" name="Nucleic Acids Res.">
        <title>A nomenclature for restriction enzymes, DNA methyltransferases, homing endonucleases and their genes.</title>
        <authorList>
            <person name="Roberts R.J."/>
            <person name="Belfort M."/>
            <person name="Bestor T."/>
            <person name="Bhagwat A.S."/>
            <person name="Bickle T.A."/>
            <person name="Bitinaite J."/>
            <person name="Blumenthal R.M."/>
            <person name="Degtyarev S.K."/>
            <person name="Dryden D.T."/>
            <person name="Dybvig K."/>
            <person name="Firman K."/>
            <person name="Gromova E.S."/>
            <person name="Gumport R.I."/>
            <person name="Halford S.E."/>
            <person name="Hattman S."/>
            <person name="Heitman J."/>
            <person name="Hornby D.P."/>
            <person name="Janulaitis A."/>
            <person name="Jeltsch A."/>
            <person name="Josephsen J."/>
            <person name="Kiss A."/>
            <person name="Klaenhammer T.R."/>
            <person name="Kobayashi I."/>
            <person name="Kong H."/>
            <person name="Krueger D.H."/>
            <person name="Lacks S."/>
            <person name="Marinus M.G."/>
            <person name="Miyahara M."/>
            <person name="Morgan R.D."/>
            <person name="Murray N.E."/>
            <person name="Nagaraja V."/>
            <person name="Piekarowicz A."/>
            <person name="Pingoud A."/>
            <person name="Raleigh E."/>
            <person name="Rao D.N."/>
            <person name="Reich N."/>
            <person name="Repin V.E."/>
            <person name="Selker E.U."/>
            <person name="Shaw P.C."/>
            <person name="Stein D.C."/>
            <person name="Stoddard B.L."/>
            <person name="Szybalski W."/>
            <person name="Trautner T.A."/>
            <person name="Van Etten J.L."/>
            <person name="Vitor J.M."/>
            <person name="Wilson G.G."/>
            <person name="Xu S.Y."/>
        </authorList>
    </citation>
    <scope>NOMENCLATURE</scope>
</reference>
<feature type="chain" id="PRO_0000087869" description="Orphan methyltransferase M.Rho11sI">
    <location>
        <begin position="1"/>
        <end position="503"/>
    </location>
</feature>
<feature type="domain" description="SAM-dependent MTase C5-type" evidence="1">
    <location>
        <begin position="4"/>
        <end position="500"/>
    </location>
</feature>
<feature type="active site" evidence="1 2">
    <location>
        <position position="78"/>
    </location>
</feature>
<keyword id="KW-0238">DNA-binding</keyword>
<keyword id="KW-0945">Host-virus interaction</keyword>
<keyword id="KW-1090">Inhibition of host innate immune response by virus</keyword>
<keyword id="KW-0489">Methyltransferase</keyword>
<keyword id="KW-1258">Restriction-modification system evasion by virus</keyword>
<keyword id="KW-0949">S-adenosyl-L-methionine</keyword>
<keyword id="KW-0808">Transferase</keyword>
<keyword id="KW-0899">Viral immunoevasion</keyword>
<dbReference type="EC" id="2.1.1.37"/>
<dbReference type="EMBL" id="X05242">
    <property type="protein sequence ID" value="CAA28869.1"/>
    <property type="molecule type" value="Genomic_DNA"/>
</dbReference>
<dbReference type="PIR" id="A28137">
    <property type="entry name" value="CTBPRH"/>
</dbReference>
<dbReference type="SMR" id="P09915"/>
<dbReference type="REBASE" id="2835">
    <property type="entry name" value="M.Rho11sI"/>
</dbReference>
<dbReference type="REBASE" id="7238">
    <property type="entry name" value="M.Rho11sII"/>
</dbReference>
<dbReference type="GO" id="GO:0003886">
    <property type="term" value="F:DNA (cytosine-5-)-methyltransferase activity"/>
    <property type="evidence" value="ECO:0007669"/>
    <property type="project" value="UniProtKB-EC"/>
</dbReference>
<dbReference type="GO" id="GO:0003677">
    <property type="term" value="F:DNA binding"/>
    <property type="evidence" value="ECO:0007669"/>
    <property type="project" value="UniProtKB-KW"/>
</dbReference>
<dbReference type="GO" id="GO:0032259">
    <property type="term" value="P:methylation"/>
    <property type="evidence" value="ECO:0007669"/>
    <property type="project" value="UniProtKB-KW"/>
</dbReference>
<dbReference type="GO" id="GO:0099018">
    <property type="term" value="P:symbiont-mediated evasion of host restriction-modification system"/>
    <property type="evidence" value="ECO:0007669"/>
    <property type="project" value="UniProtKB-KW"/>
</dbReference>
<dbReference type="GO" id="GO:0052170">
    <property type="term" value="P:symbiont-mediated suppression of host innate immune response"/>
    <property type="evidence" value="ECO:0007669"/>
    <property type="project" value="UniProtKB-KW"/>
</dbReference>
<dbReference type="CDD" id="cd00315">
    <property type="entry name" value="Cyt_C5_DNA_methylase"/>
    <property type="match status" value="1"/>
</dbReference>
<dbReference type="Gene3D" id="3.90.120.10">
    <property type="entry name" value="DNA Methylase, subunit A, domain 2"/>
    <property type="match status" value="2"/>
</dbReference>
<dbReference type="Gene3D" id="3.40.50.150">
    <property type="entry name" value="Vaccinia Virus protein VP39"/>
    <property type="match status" value="1"/>
</dbReference>
<dbReference type="InterPro" id="IPR050750">
    <property type="entry name" value="C5-MTase"/>
</dbReference>
<dbReference type="InterPro" id="IPR018117">
    <property type="entry name" value="C5_DNA_meth_AS"/>
</dbReference>
<dbReference type="InterPro" id="IPR001525">
    <property type="entry name" value="C5_MeTfrase"/>
</dbReference>
<dbReference type="InterPro" id="IPR031303">
    <property type="entry name" value="C5_meth_CS"/>
</dbReference>
<dbReference type="InterPro" id="IPR029063">
    <property type="entry name" value="SAM-dependent_MTases_sf"/>
</dbReference>
<dbReference type="NCBIfam" id="TIGR00675">
    <property type="entry name" value="dcm"/>
    <property type="match status" value="1"/>
</dbReference>
<dbReference type="PANTHER" id="PTHR46098">
    <property type="entry name" value="TRNA (CYTOSINE(38)-C(5))-METHYLTRANSFERASE"/>
    <property type="match status" value="1"/>
</dbReference>
<dbReference type="PANTHER" id="PTHR46098:SF1">
    <property type="entry name" value="TRNA (CYTOSINE(38)-C(5))-METHYLTRANSFERASE"/>
    <property type="match status" value="1"/>
</dbReference>
<dbReference type="Pfam" id="PF00145">
    <property type="entry name" value="DNA_methylase"/>
    <property type="match status" value="1"/>
</dbReference>
<dbReference type="PRINTS" id="PR00105">
    <property type="entry name" value="C5METTRFRASE"/>
</dbReference>
<dbReference type="SUPFAM" id="SSF53335">
    <property type="entry name" value="S-adenosyl-L-methionine-dependent methyltransferases"/>
    <property type="match status" value="1"/>
</dbReference>
<dbReference type="PROSITE" id="PS00094">
    <property type="entry name" value="C5_MTASE_1"/>
    <property type="match status" value="1"/>
</dbReference>
<dbReference type="PROSITE" id="PS00095">
    <property type="entry name" value="C5_MTASE_2"/>
    <property type="match status" value="1"/>
</dbReference>
<dbReference type="PROSITE" id="PS51679">
    <property type="entry name" value="SAM_MT_C5"/>
    <property type="match status" value="1"/>
</dbReference>
<evidence type="ECO:0000255" key="1">
    <source>
        <dbReference type="PROSITE-ProRule" id="PRU01016"/>
    </source>
</evidence>
<evidence type="ECO:0000255" key="2">
    <source>
        <dbReference type="PROSITE-ProRule" id="PRU10018"/>
    </source>
</evidence>
<evidence type="ECO:0000303" key="3">
    <source>
    </source>
</evidence>
<evidence type="ECO:0000305" key="4"/>
<evidence type="ECO:0000305" key="5">
    <source>
    </source>
</evidence>
<organism>
    <name type="scientific">Bacillus phage rho11s</name>
    <name type="common">Bacteriophage rho-11s</name>
    <dbReference type="NCBI Taxonomy" id="10735"/>
    <lineage>
        <taxon>Viruses</taxon>
        <taxon>Duplodnaviria</taxon>
        <taxon>Heunggongvirae</taxon>
        <taxon>Uroviricota</taxon>
        <taxon>Caudoviricetes</taxon>
        <taxon>Lambdavirus</taxon>
    </lineage>
</organism>
<comment type="function">
    <text evidence="3 4 5">A methyltransferase that methylates C-? within the sequences 5'-GGCC-3' and 5'-GAGCTC-3' (Probable). A methyltransferase that methylates C-1 within the sequences 5'-GGCC-3' and C-2 in 5'-GCNGC-3' (PubMed:12654995). Modification confers resistance against restriction enzymes that recognize these sequences (Probable).</text>
</comment>
<comment type="catalytic activity">
    <reaction evidence="2">
        <text>a 2'-deoxycytidine in DNA + S-adenosyl-L-methionine = a 5-methyl-2'-deoxycytidine in DNA + S-adenosyl-L-homocysteine + H(+)</text>
        <dbReference type="Rhea" id="RHEA:13681"/>
        <dbReference type="Rhea" id="RHEA-COMP:11369"/>
        <dbReference type="Rhea" id="RHEA-COMP:11370"/>
        <dbReference type="ChEBI" id="CHEBI:15378"/>
        <dbReference type="ChEBI" id="CHEBI:57856"/>
        <dbReference type="ChEBI" id="CHEBI:59789"/>
        <dbReference type="ChEBI" id="CHEBI:85452"/>
        <dbReference type="ChEBI" id="CHEBI:85454"/>
        <dbReference type="EC" id="2.1.1.37"/>
    </reaction>
</comment>
<comment type="similarity">
    <text evidence="1">Belongs to the class I-like SAM-binding methyltransferase superfamily. C5-methyltransferase family.</text>
</comment>
<proteinExistence type="inferred from homology"/>
<name>MTBR_BPRH1</name>